<keyword id="KW-0004">4Fe-4S</keyword>
<keyword id="KW-0963">Cytoplasm</keyword>
<keyword id="KW-0903">Direct protein sequencing</keyword>
<keyword id="KW-0285">Flavoprotein</keyword>
<keyword id="KW-0288">FMN</keyword>
<keyword id="KW-0408">Iron</keyword>
<keyword id="KW-0411">Iron-sulfur</keyword>
<keyword id="KW-0456">Lyase</keyword>
<keyword id="KW-0460">Magnesium</keyword>
<keyword id="KW-0479">Metal-binding</keyword>
<keyword id="KW-1185">Reference proteome</keyword>
<accession>P11569</accession>
<accession>D2RM67</accession>
<accession>Q44043</accession>
<organism>
    <name type="scientific">Acidaminococcus fermentans (strain ATCC 25085 / DSM 20731 / CCUG 9996 / CIP 106432 / VR4)</name>
    <dbReference type="NCBI Taxonomy" id="591001"/>
    <lineage>
        <taxon>Bacteria</taxon>
        <taxon>Bacillati</taxon>
        <taxon>Bacillota</taxon>
        <taxon>Negativicutes</taxon>
        <taxon>Acidaminococcales</taxon>
        <taxon>Acidaminococcaceae</taxon>
        <taxon>Acidaminococcus</taxon>
    </lineage>
</organism>
<reference key="1">
    <citation type="journal article" date="1989" name="Eur. J. Biochem.">
        <title>Cloning and sequencing of the genes of 2-hydoxyglutaryl-CoA dehydratase from Acidaminococcus fermentans.</title>
        <authorList>
            <person name="Dutscho R."/>
            <person name="Wohlfarth G."/>
            <person name="Buckel P."/>
            <person name="Buckel W."/>
        </authorList>
    </citation>
    <scope>NUCLEOTIDE SEQUENCE [GENOMIC DNA]</scope>
    <scope>PROTEIN SEQUENCE OF 2-36</scope>
    <scope>SUBCELLULAR LOCATION</scope>
    <source>
        <strain>ATCC 25085 / DSM 20731 / CCUG 9996 / CIP 106432 / VR4</strain>
    </source>
</reference>
<reference key="2">
    <citation type="journal article" date="2010" name="Stand. Genomic Sci.">
        <title>Complete genome sequence of Acidaminococcus fermentans type strain (VR4).</title>
        <authorList>
            <person name="Chang Y.J."/>
            <person name="Pukall R."/>
            <person name="Saunders E."/>
            <person name="Lapidus A."/>
            <person name="Copeland A."/>
            <person name="Nolan M."/>
            <person name="Glavina Del Rio T."/>
            <person name="Lucas S."/>
            <person name="Chen F."/>
            <person name="Tice H."/>
            <person name="Cheng J.F."/>
            <person name="Han C."/>
            <person name="Detter J.C."/>
            <person name="Bruce D."/>
            <person name="Goodwin L."/>
            <person name="Pitluck S."/>
            <person name="Mikhailova N."/>
            <person name="Liolios K."/>
            <person name="Pati A."/>
            <person name="Ivanova N."/>
            <person name="Mavromatis K."/>
            <person name="Chen A."/>
            <person name="Palaniappan K."/>
            <person name="Land M."/>
            <person name="Hauser L."/>
            <person name="Jeffries C.D."/>
            <person name="Brettin T."/>
            <person name="Rohde M."/>
            <person name="Goker M."/>
            <person name="Bristow J."/>
            <person name="Eisen J.A."/>
            <person name="Markowitz V."/>
            <person name="Hugenholtz P."/>
            <person name="Kyrpides N.C."/>
            <person name="Klenk H.P."/>
        </authorList>
    </citation>
    <scope>NUCLEOTIDE SEQUENCE [LARGE SCALE GENOMIC DNA]</scope>
    <source>
        <strain>ATCC 25085 / DSM 20731 / CCUG 9996 / CIP 106432 / VR4</strain>
    </source>
</reference>
<reference key="3">
    <citation type="journal article" date="1993" name="FEBS Lett.">
        <title>Identification of the gene encoding the activator of (R)-2-hydroxyglutaryl-CoA dehydratase from Acidaminococcus fermentans by gene expression in Escherichia coli.</title>
        <authorList>
            <person name="Bendrat K."/>
            <person name="Mueller U."/>
            <person name="Klees A.-G."/>
            <person name="Buckel W."/>
        </authorList>
    </citation>
    <scope>NUCLEOTIDE SEQUENCE [GENOMIC DNA] OF 1-24</scope>
</reference>
<reference key="4">
    <citation type="journal article" date="1987" name="Eur. J. Biochem.">
        <title>Purification of 2-hydroxyglutaryl-CoA dehydratase from Acidaminococcus fermentans. An iron-sulfur protein.</title>
        <authorList>
            <person name="Schweiger G."/>
            <person name="Dutscho R."/>
            <person name="Buckel W."/>
        </authorList>
    </citation>
    <scope>PROTEIN SEQUENCE OF 2-34</scope>
    <scope>FUNCTION</scope>
    <scope>CATALYTIC ACTIVITY</scope>
    <scope>COFACTOR</scope>
    <scope>SUBUNIT</scope>
    <scope>PATHWAY</scope>
    <source>
        <strain>ATCC 25085 / DSM 20731 / CCUG 9996 / CIP 106432 / VR4</strain>
    </source>
</reference>
<reference key="5">
    <citation type="journal article" date="1980" name="Eur. J. Biochem.">
        <title>The reversible dehydration of (R)-2-hydroxyglutarate to (E)-glutaconate.</title>
        <authorList>
            <person name="Buckel W."/>
        </authorList>
    </citation>
    <scope>FUNCTION</scope>
    <scope>CATALYTIC ACTIVITY</scope>
    <source>
        <strain>ATCC 25085 / DSM 20731 / CCUG 9996 / CIP 106432 / VR4</strain>
    </source>
</reference>
<reference key="6">
    <citation type="journal article" date="1995" name="Eur. J. Biochem.">
        <title>Activation of (R)-2-hydroxyglutaryl-CoA dehydratase from Acidaminococcus fermentans.</title>
        <authorList>
            <person name="Mueller U."/>
            <person name="Buckel W."/>
        </authorList>
    </citation>
    <scope>FUNCTION</scope>
    <scope>CATALYTIC ACTIVITY</scope>
    <scope>ACTIVITY REGULATION</scope>
    <scope>COFACTOR</scope>
    <scope>SUBUNIT</scope>
    <source>
        <strain>ATCC 25085 / DSM 20731 / CCUG 9996 / CIP 106432 / VR4</strain>
    </source>
</reference>
<reference key="7">
    <citation type="journal article" date="2000" name="Eur. J. Biochem.">
        <title>The iron-sulfur clusters in 2-hydroxyglutaryl-CoA dehydratase from Acidaminococcus fermentans. Biochemical and spectroscopic investigations.</title>
        <authorList>
            <person name="Hans M."/>
            <person name="Buckel W."/>
            <person name="Bill E."/>
        </authorList>
    </citation>
    <scope>COFACTOR</scope>
</reference>
<feature type="initiator methionine" description="Removed" evidence="2 3">
    <location>
        <position position="1"/>
    </location>
</feature>
<feature type="chain" id="PRO_0000083963" description="(R)-2-hydroxyglutaryl-CoA dehydratase, subunit alpha">
    <location>
        <begin position="2"/>
        <end position="477"/>
    </location>
</feature>
<feature type="sequence conflict" description="In Ref. 1; CAA32465." evidence="8" ref="1">
    <original>A</original>
    <variation>P</variation>
    <location>
        <position position="26"/>
    </location>
</feature>
<feature type="sequence conflict" description="In Ref. 1; CAA32465." evidence="8" ref="1">
    <original>G</original>
    <variation>R</variation>
    <location>
        <position position="49"/>
    </location>
</feature>
<protein>
    <recommendedName>
        <fullName evidence="7">(R)-2-hydroxyglutaryl-CoA dehydratase, subunit alpha</fullName>
        <ecNumber evidence="10 11 12">4.2.1.167</ecNumber>
    </recommendedName>
    <alternativeName>
        <fullName evidence="7">(R)-2-hydroxyglutaryl-CoA dehydratase, component D</fullName>
    </alternativeName>
</protein>
<comment type="function">
    <text evidence="3 4 5">Involved in the fermentation of L-glutamate via the hydroxyglutarate pathway (PubMed:3691501). Catalyzes the reversible syn-elimination of water from (R)-2-hydroxyglutaryl-CoA to yield (E)-glutaconyl-CoA (PubMed:3691501, PubMed:7398622, PubMed:7607244). The dehydration mechanism involves a transient one electron reduction of the thioester from (R)-2-hydroxyglutaryl-CoA, generating a ketyl radical (PubMed:7607244). Prior to (E)-glutaconyl-CoA formation, the ketyl radical is subsequently reoxidized by electron transfer back to the HgdA-HgdB complex (CompD) to avoid change in oxidation state of the substrate (PubMed:7607244). The appropriate redox state of dehydratase HgdA-HgdB complex (CompD) is maintained by HgdC (CompA) via hydrolysis of ATP and ATP-dependent electron transfer (PubMed:7607244). Since the electron is recycled, the dehydratase is able to perform several turnovers with only catalytic amounts of ATP and substoichiometric amounts of HgdC (CompA) (PubMed:7607244).</text>
</comment>
<comment type="catalytic activity">
    <reaction evidence="10 11 12">
        <text>(R)-2-hydroxyglutaryl-CoA = (2E)-glutaconyl-CoA + H2O</text>
        <dbReference type="Rhea" id="RHEA:42448"/>
        <dbReference type="ChEBI" id="CHEBI:15377"/>
        <dbReference type="ChEBI" id="CHEBI:57353"/>
        <dbReference type="ChEBI" id="CHEBI:132946"/>
        <dbReference type="EC" id="4.2.1.167"/>
    </reaction>
</comment>
<comment type="cofactor">
    <cofactor evidence="1 3 5">
        <name>[4Fe-4S] cluster</name>
        <dbReference type="ChEBI" id="CHEBI:49883"/>
    </cofactor>
    <text evidence="1 5 10">Binds 1 [4Fe-4S] cluster per heterodimer.</text>
</comment>
<comment type="cofactor">
    <cofactor evidence="1 5">
        <name>FMN</name>
        <dbReference type="ChEBI" id="CHEBI:58210"/>
    </cofactor>
    <text evidence="1 5">Binds 1 FMN per heterodimer.</text>
</comment>
<comment type="cofactor">
    <cofactor evidence="1 5">
        <name>Mg(2+)</name>
        <dbReference type="ChEBI" id="CHEBI:18420"/>
    </cofactor>
</comment>
<comment type="activity regulation">
    <text evidence="5">Activated by the HgdC. Reversibly inactivated by oxidants such as 2-nitrophenol, 3-nitrophenol, 4-nitrophenol, 4-nitrobenzoate, carbonyl cyanide 4-(trifluoromethoxy)phenylhydrazone (FCCP) and chloramphenicol. Irreversibly inactivated by oxidants such as hydroxylamine and nitrite.</text>
</comment>
<comment type="pathway">
    <text evidence="10">Amino-acid degradation; L-glutamate degradation via hydroxyglutarate pathway; crotonoyl-CoA from L-glutamate: step 4/5.</text>
</comment>
<comment type="subunit">
    <text evidence="5 10">The (R)-2-hydroxyglutaryl-CoA dehydratase enzyme system is a heterodimer composed of an alpha subunit (HgdA) and a beta subunit (HgdB).</text>
</comment>
<comment type="subcellular location">
    <subcellularLocation>
        <location evidence="9">Cytoplasm</location>
    </subcellularLocation>
</comment>
<comment type="similarity">
    <text evidence="8">Belongs to the FldB/FldC dehydratase alpha/beta subunit family.</text>
</comment>
<evidence type="ECO:0000269" key="1">
    <source>
    </source>
</evidence>
<evidence type="ECO:0000269" key="2">
    <source>
    </source>
</evidence>
<evidence type="ECO:0000269" key="3">
    <source>
    </source>
</evidence>
<evidence type="ECO:0000269" key="4">
    <source>
    </source>
</evidence>
<evidence type="ECO:0000269" key="5">
    <source>
    </source>
</evidence>
<evidence type="ECO:0000303" key="6">
    <source>
    </source>
</evidence>
<evidence type="ECO:0000303" key="7">
    <source>
    </source>
</evidence>
<evidence type="ECO:0000305" key="8"/>
<evidence type="ECO:0000305" key="9">
    <source>
    </source>
</evidence>
<evidence type="ECO:0000305" key="10">
    <source>
    </source>
</evidence>
<evidence type="ECO:0000305" key="11">
    <source>
    </source>
</evidence>
<evidence type="ECO:0000305" key="12">
    <source>
    </source>
</evidence>
<dbReference type="EC" id="4.2.1.167" evidence="10 11 12"/>
<dbReference type="EMBL" id="X14252">
    <property type="protein sequence ID" value="CAA32465.1"/>
    <property type="molecule type" value="Genomic_DNA"/>
</dbReference>
<dbReference type="EMBL" id="CP001859">
    <property type="protein sequence ID" value="ADB48169.1"/>
    <property type="molecule type" value="Genomic_DNA"/>
</dbReference>
<dbReference type="EMBL" id="X59645">
    <property type="protein sequence ID" value="CAA42197.1"/>
    <property type="molecule type" value="Genomic_DNA"/>
</dbReference>
<dbReference type="PIR" id="S04477">
    <property type="entry name" value="DWDXAF"/>
</dbReference>
<dbReference type="RefSeq" id="WP_012939152.1">
    <property type="nucleotide sequence ID" value="NC_013740.1"/>
</dbReference>
<dbReference type="SMR" id="P11569"/>
<dbReference type="STRING" id="591001.Acfer_1815"/>
<dbReference type="GeneID" id="78335511"/>
<dbReference type="KEGG" id="afn:Acfer_1815"/>
<dbReference type="eggNOG" id="COG1775">
    <property type="taxonomic scope" value="Bacteria"/>
</dbReference>
<dbReference type="HOGENOM" id="CLU_049730_0_0_9"/>
<dbReference type="OrthoDB" id="9810278at2"/>
<dbReference type="BioCyc" id="MetaCyc:MONOMER-1043"/>
<dbReference type="BRENDA" id="4.2.1.167">
    <property type="organism ID" value="85"/>
</dbReference>
<dbReference type="UniPathway" id="UPA00533">
    <property type="reaction ID" value="UER00687"/>
</dbReference>
<dbReference type="Proteomes" id="UP000001902">
    <property type="component" value="Chromosome"/>
</dbReference>
<dbReference type="GO" id="GO:0005737">
    <property type="term" value="C:cytoplasm"/>
    <property type="evidence" value="ECO:0007669"/>
    <property type="project" value="UniProtKB-SubCell"/>
</dbReference>
<dbReference type="GO" id="GO:0043717">
    <property type="term" value="F:2-hydroxyglutaryl-CoA dehydratase activity"/>
    <property type="evidence" value="ECO:0007669"/>
    <property type="project" value="RHEA"/>
</dbReference>
<dbReference type="GO" id="GO:0051539">
    <property type="term" value="F:4 iron, 4 sulfur cluster binding"/>
    <property type="evidence" value="ECO:0007669"/>
    <property type="project" value="UniProtKB-KW"/>
</dbReference>
<dbReference type="GO" id="GO:0046872">
    <property type="term" value="F:metal ion binding"/>
    <property type="evidence" value="ECO:0007669"/>
    <property type="project" value="UniProtKB-KW"/>
</dbReference>
<dbReference type="GO" id="GO:0019552">
    <property type="term" value="P:glutamate catabolic process via 2-hydroxyglutarate"/>
    <property type="evidence" value="ECO:0007669"/>
    <property type="project" value="UniProtKB-UniPathway"/>
</dbReference>
<dbReference type="Gene3D" id="3.40.50.11890">
    <property type="match status" value="1"/>
</dbReference>
<dbReference type="Gene3D" id="3.40.50.11900">
    <property type="match status" value="1"/>
</dbReference>
<dbReference type="InterPro" id="IPR010327">
    <property type="entry name" value="FldB/FldC_alpha/beta"/>
</dbReference>
<dbReference type="PANTHER" id="PTHR30548">
    <property type="entry name" value="2-HYDROXYGLUTARYL-COA DEHYDRATASE, D-COMPONENT-RELATED"/>
    <property type="match status" value="1"/>
</dbReference>
<dbReference type="PANTHER" id="PTHR30548:SF4">
    <property type="entry name" value="SUBUNIT OF OXYGEN-SENSITIVE 2-HYDROXYISOCAPROYL-COA DEHYDRATASE"/>
    <property type="match status" value="1"/>
</dbReference>
<dbReference type="Pfam" id="PF06050">
    <property type="entry name" value="HGD-D"/>
    <property type="match status" value="1"/>
</dbReference>
<proteinExistence type="evidence at protein level"/>
<gene>
    <name evidence="6" type="primary">hgdA</name>
    <name type="ordered locus">Acfer_1815</name>
</gene>
<name>HGDA_ACIFV</name>
<sequence length="477" mass="53896">MPKTVSPGVQALRDVVEKVYRELREAKERGEKVGWSSSKFPCELAESFGLHVGYPENQAAGIAANRDGEVMCQAAEDIGYDNDICGYARISLAYAAGFRGANKMDKDGNYVINPHSGKQMKDANGKKVFDADGKPVIDPKTLKPFATTDNIYEIAALPEGEEKTRRQNALHKYRQMTMPMPDFVLCCNNICNCMTKWYEDIARRHNIPLIMIDVPYNEFDHVNEANVKYIRSQLDTAIRQMEEITGKKFDEDKFEQCCQNANRTAKAWLKVCDYLQYKPAPFNGFDLFNHMADVVTARGRVEAAEAFELLAKELEQHVKEGTTTAPFKEQHRIMFEGIPCWPKLPNLFKPLKANGLNITGVVYAPAFGFVYNNLDELVKAYCKAPNSVSIEQGVAWREGLIRDNKVDGVLVHYNRSCKPWSGYMPEMQRRFTKDMGIPTAGFDGDQADPRNFNAAQYETRVQGLVEAMEANDEKKGK</sequence>